<gene>
    <name type="primary">YHB1</name>
    <name type="ordered locus">CAALFM_CR07790CA</name>
    <name type="ORF">CaO19.11192</name>
    <name type="ORF">CaO19.3707</name>
</gene>
<sequence length="398" mass="45819">MTVEYETKQLTPAQIKIILDTVPILEEAGETLTQKFYQRMIGNYDEVKPFFNTTDQKLLRQPKILAFALLNYAKNIEDLTPLTDFVKQIVVKHIGLQVLPEHYPIVGTCLIQTMVELLPPEIANKDFLEAWTIAYGNLAKLLIDLEAAEYAKQPWRWFKDFKVTRIVQECKDVKSVYFTPVDKDLLPLPKPERGQYLCFRWKLPGEEFEISREYSVSEFPKENEYRISVRHVPGGKISGYIHNNLKVGDILKVAPPAGNFVYDPATDKELIFVAGGIGITPLLSMIERALEEGKNVKLLYSNRSAETRAFGNLFKEYKSKFGDKFQAIEYFSEDNNTDDKIVIDKAFNRKLTTDDLDFIAPEHDVYLVGPREFMKDIKEHLGKKNVPVKLEYFGPYDP</sequence>
<feature type="chain" id="PRO_0000422070" description="Flavohemoprotein">
    <location>
        <begin position="1"/>
        <end position="398"/>
    </location>
</feature>
<feature type="domain" description="Globin" evidence="2">
    <location>
        <begin position="9"/>
        <end position="147"/>
    </location>
</feature>
<feature type="domain" description="FAD-binding FR-type" evidence="3">
    <location>
        <begin position="156"/>
        <end position="263"/>
    </location>
</feature>
<feature type="region of interest" description="Reductase" evidence="1">
    <location>
        <begin position="155"/>
        <end position="398"/>
    </location>
</feature>
<feature type="active site" description="Charge relay system" evidence="1">
    <location>
        <position position="103"/>
    </location>
</feature>
<feature type="active site" description="Charge relay system" evidence="1">
    <location>
        <position position="146"/>
    </location>
</feature>
<feature type="binding site" description="proximal binding residue" evidence="2">
    <location>
        <position position="93"/>
    </location>
    <ligand>
        <name>heme b</name>
        <dbReference type="ChEBI" id="CHEBI:60344"/>
    </ligand>
    <ligandPart>
        <name>Fe</name>
        <dbReference type="ChEBI" id="CHEBI:18248"/>
    </ligandPart>
</feature>
<feature type="binding site" evidence="1">
    <location>
        <position position="196"/>
    </location>
    <ligand>
        <name>FAD</name>
        <dbReference type="ChEBI" id="CHEBI:57692"/>
    </ligand>
</feature>
<feature type="binding site" evidence="1">
    <location>
        <begin position="212"/>
        <end position="215"/>
    </location>
    <ligand>
        <name>FAD</name>
        <dbReference type="ChEBI" id="CHEBI:57692"/>
    </ligand>
</feature>
<feature type="binding site" evidence="1">
    <location>
        <begin position="276"/>
        <end position="281"/>
    </location>
    <ligand>
        <name>NADP(+)</name>
        <dbReference type="ChEBI" id="CHEBI:58349"/>
    </ligand>
</feature>
<feature type="binding site" evidence="1">
    <location>
        <begin position="395"/>
        <end position="398"/>
    </location>
    <ligand>
        <name>FAD</name>
        <dbReference type="ChEBI" id="CHEBI:57692"/>
    </ligand>
</feature>
<feature type="site" description="Involved in heme-bound ligand stabilization and O-O bond activation" evidence="1">
    <location>
        <position position="37"/>
    </location>
</feature>
<feature type="site" description="Influences the redox potential of the prosthetic heme and FAD groups" evidence="1">
    <location>
        <position position="92"/>
    </location>
</feature>
<keyword id="KW-0963">Cytoplasm</keyword>
<keyword id="KW-0216">Detoxification</keyword>
<keyword id="KW-0274">FAD</keyword>
<keyword id="KW-0285">Flavoprotein</keyword>
<keyword id="KW-0349">Heme</keyword>
<keyword id="KW-0408">Iron</keyword>
<keyword id="KW-0479">Metal-binding</keyword>
<keyword id="KW-0520">NAD</keyword>
<keyword id="KW-0521">NADP</keyword>
<keyword id="KW-0560">Oxidoreductase</keyword>
<keyword id="KW-1185">Reference proteome</keyword>
<keyword id="KW-0843">Virulence</keyword>
<name>FHP_CANAL</name>
<accession>Q59MV9</accession>
<accession>A0A1D8PTL9</accession>
<accession>Q59MX2</accession>
<evidence type="ECO:0000250" key="1"/>
<evidence type="ECO:0000255" key="2">
    <source>
        <dbReference type="PROSITE-ProRule" id="PRU00238"/>
    </source>
</evidence>
<evidence type="ECO:0000255" key="3">
    <source>
        <dbReference type="PROSITE-ProRule" id="PRU00716"/>
    </source>
</evidence>
<evidence type="ECO:0000269" key="4">
    <source>
    </source>
</evidence>
<evidence type="ECO:0000269" key="5">
    <source>
    </source>
</evidence>
<evidence type="ECO:0000269" key="6">
    <source>
    </source>
</evidence>
<evidence type="ECO:0000269" key="7">
    <source>
    </source>
</evidence>
<evidence type="ECO:0000269" key="8">
    <source>
    </source>
</evidence>
<evidence type="ECO:0000269" key="9">
    <source>
    </source>
</evidence>
<evidence type="ECO:0000269" key="10">
    <source>
    </source>
</evidence>
<evidence type="ECO:0000269" key="11">
    <source>
    </source>
</evidence>
<evidence type="ECO:0000269" key="12">
    <source>
    </source>
</evidence>
<evidence type="ECO:0000269" key="13">
    <source>
    </source>
</evidence>
<evidence type="ECO:0000269" key="14">
    <source>
    </source>
</evidence>
<evidence type="ECO:0000269" key="15">
    <source>
    </source>
</evidence>
<evidence type="ECO:0000269" key="16">
    <source>
    </source>
</evidence>
<organism>
    <name type="scientific">Candida albicans (strain SC5314 / ATCC MYA-2876)</name>
    <name type="common">Yeast</name>
    <dbReference type="NCBI Taxonomy" id="237561"/>
    <lineage>
        <taxon>Eukaryota</taxon>
        <taxon>Fungi</taxon>
        <taxon>Dikarya</taxon>
        <taxon>Ascomycota</taxon>
        <taxon>Saccharomycotina</taxon>
        <taxon>Pichiomycetes</taxon>
        <taxon>Debaryomycetaceae</taxon>
        <taxon>Candida/Lodderomyces clade</taxon>
        <taxon>Candida</taxon>
    </lineage>
</organism>
<protein>
    <recommendedName>
        <fullName>Flavohemoprotein</fullName>
        <ecNumber>1.14.12.17</ecNumber>
    </recommendedName>
    <alternativeName>
        <fullName>Flavohemoglobin</fullName>
    </alternativeName>
    <alternativeName>
        <fullName>Hemoglobin-like protein</fullName>
    </alternativeName>
    <alternativeName>
        <fullName>Nitric oxide dioxygenase</fullName>
        <shortName>NO oxygenase</shortName>
        <shortName>NOD</shortName>
    </alternativeName>
</protein>
<reference key="1">
    <citation type="journal article" date="2004" name="Proc. Natl. Acad. Sci. U.S.A.">
        <title>The diploid genome sequence of Candida albicans.</title>
        <authorList>
            <person name="Jones T."/>
            <person name="Federspiel N.A."/>
            <person name="Chibana H."/>
            <person name="Dungan J."/>
            <person name="Kalman S."/>
            <person name="Magee B.B."/>
            <person name="Newport G."/>
            <person name="Thorstenson Y.R."/>
            <person name="Agabian N."/>
            <person name="Magee P.T."/>
            <person name="Davis R.W."/>
            <person name="Scherer S."/>
        </authorList>
    </citation>
    <scope>NUCLEOTIDE SEQUENCE [LARGE SCALE GENOMIC DNA]</scope>
    <source>
        <strain>SC5314 / ATCC MYA-2876</strain>
    </source>
</reference>
<reference key="2">
    <citation type="journal article" date="2007" name="Genome Biol.">
        <title>Assembly of the Candida albicans genome into sixteen supercontigs aligned on the eight chromosomes.</title>
        <authorList>
            <person name="van het Hoog M."/>
            <person name="Rast T.J."/>
            <person name="Martchenko M."/>
            <person name="Grindle S."/>
            <person name="Dignard D."/>
            <person name="Hogues H."/>
            <person name="Cuomo C."/>
            <person name="Berriman M."/>
            <person name="Scherer S."/>
            <person name="Magee B.B."/>
            <person name="Whiteway M."/>
            <person name="Chibana H."/>
            <person name="Nantel A."/>
            <person name="Magee P.T."/>
        </authorList>
    </citation>
    <scope>GENOME REANNOTATION</scope>
    <source>
        <strain>SC5314 / ATCC MYA-2876</strain>
    </source>
</reference>
<reference key="3">
    <citation type="journal article" date="2013" name="Genome Biol.">
        <title>Assembly of a phased diploid Candida albicans genome facilitates allele-specific measurements and provides a simple model for repeat and indel structure.</title>
        <authorList>
            <person name="Muzzey D."/>
            <person name="Schwartz K."/>
            <person name="Weissman J.S."/>
            <person name="Sherlock G."/>
        </authorList>
    </citation>
    <scope>NUCLEOTIDE SEQUENCE [LARGE SCALE GENOMIC DNA]</scope>
    <scope>GENOME REANNOTATION</scope>
    <source>
        <strain>SC5314 / ATCC MYA-2876</strain>
    </source>
</reference>
<reference key="4">
    <citation type="journal article" date="2002" name="Mol. Biol. Cell">
        <title>Transcription profiling of Candida albicans cells undergoing the yeast-to-hyphal transition.</title>
        <authorList>
            <person name="Nantel A."/>
            <person name="Dignard D."/>
            <person name="Bachewich C."/>
            <person name="Harcus D."/>
            <person name="Marcil A."/>
            <person name="Bouin A.P."/>
            <person name="Sensen C.W."/>
            <person name="Hogues H."/>
            <person name="van het Hoog M."/>
            <person name="Gordon P."/>
            <person name="Rigby T."/>
            <person name="Benoit F."/>
            <person name="Tessier D.C."/>
            <person name="Thomas D.Y."/>
            <person name="Whiteway M."/>
        </authorList>
    </citation>
    <scope>INDUCTION</scope>
</reference>
<reference key="5">
    <citation type="journal article" date="2004" name="Eukaryot. Cell">
        <title>Inducible defense mechanism against nitric oxide in Candida albicans.</title>
        <authorList>
            <person name="Ullmann B.D."/>
            <person name="Myers H."/>
            <person name="Chiranand W."/>
            <person name="Lazzell A.L."/>
            <person name="Zhao Q."/>
            <person name="Vega L.A."/>
            <person name="Lopez-Ribot J.L."/>
            <person name="Gardner P.R."/>
            <person name="Gustin M.C."/>
        </authorList>
    </citation>
    <scope>FUNCTION</scope>
    <scope>INDUCTION</scope>
</reference>
<reference key="6">
    <citation type="journal article" date="2004" name="Eukaryot. Cell">
        <title>Transcriptional response of Candida albicans upon internalization by macrophages.</title>
        <authorList>
            <person name="Lorenz M.C."/>
            <person name="Bender J.A."/>
            <person name="Fink G.R."/>
        </authorList>
    </citation>
    <scope>INDUCTION</scope>
</reference>
<reference key="7">
    <citation type="journal article" date="2004" name="Mol. Microbiol.">
        <title>Regulatory networks affected by iron availability in Candida albicans.</title>
        <authorList>
            <person name="Lan C.Y."/>
            <person name="Rodarte G."/>
            <person name="Murillo L.A."/>
            <person name="Jones T."/>
            <person name="Davis R.W."/>
            <person name="Dungan J."/>
            <person name="Newport G."/>
            <person name="Agabian N."/>
        </authorList>
    </citation>
    <scope>INDUCTION</scope>
</reference>
<reference key="8">
    <citation type="journal article" date="2005" name="Antimicrob. Agents Chemother.">
        <title>Imidazole antibiotics inhibit the nitric oxide dioxygenase function of microbial flavohemoglobin.</title>
        <authorList>
            <person name="Helmick R.A."/>
            <person name="Fletcher A.E."/>
            <person name="Gardner A.M."/>
            <person name="Gessner C.R."/>
            <person name="Hvitved A.N."/>
            <person name="Gustin M.C."/>
            <person name="Gardner P.R."/>
        </authorList>
    </citation>
    <scope>ACTIVITY REGULATION</scope>
</reference>
<reference key="9">
    <citation type="journal article" date="2005" name="Mol. Biol. Cell">
        <title>Transcriptional response of Candida albicans to nitric oxide and the role of the YHB1 gene in nitrosative stress and virulence.</title>
        <authorList>
            <person name="Hromatka B.S."/>
            <person name="Noble S.M."/>
            <person name="Johnson A.D."/>
        </authorList>
    </citation>
    <scope>FUNCTION</scope>
    <scope>INDUCTION</scope>
</reference>
<reference key="10">
    <citation type="journal article" date="2007" name="Cell. Microbiol.">
        <title>In vivo transcript profiling of Candida albicans identifies a gene essential for interepithelial dissemination.</title>
        <authorList>
            <person name="Zakikhany K."/>
            <person name="Naglik J.R."/>
            <person name="Schmidt-Westhausen A."/>
            <person name="Holland G."/>
            <person name="Schaller M."/>
            <person name="Hube B."/>
        </authorList>
    </citation>
    <scope>INDUCTION</scope>
</reference>
<reference key="11">
    <citation type="journal article" date="2008" name="Eukaryot. Cell">
        <title>CTA4 transcription factor mediates induction of nitrosative stress response in Candida albicans.</title>
        <authorList>
            <person name="Chiranand W."/>
            <person name="McLeod I."/>
            <person name="Zhou H."/>
            <person name="Lynn J.J."/>
            <person name="Vega L.A."/>
            <person name="Myers H."/>
            <person name="Yates J.R. III"/>
            <person name="Lorenz M.C."/>
            <person name="Gustin M.C."/>
        </authorList>
    </citation>
    <scope>FUNCTION</scope>
    <scope>INDUCTION</scope>
</reference>
<reference key="12">
    <citation type="journal article" date="2008" name="Infect. Immun.">
        <title>Analysis of PRA1 and its relationship to Candida albicans- macrophage interactions.</title>
        <authorList>
            <person name="Marcil A."/>
            <person name="Gadoury C."/>
            <person name="Ash J."/>
            <person name="Zhang J."/>
            <person name="Nantel A."/>
            <person name="Whiteway M."/>
        </authorList>
    </citation>
    <scope>INDUCTION</scope>
</reference>
<reference key="13">
    <citation type="journal article" date="2010" name="J. Antimicrob. Chemother.">
        <title>Fluconazole at subinhibitory concentrations induces the oxidative- and nitrosative-responsive genes TRR1, GRE2 and YHB1, and enhances the resistance of Candida albicans to phagocytes.</title>
        <authorList>
            <person name="Arana D.M."/>
            <person name="Nombela C."/>
            <person name="Pla J."/>
        </authorList>
    </citation>
    <scope>FUNCTION</scope>
</reference>
<reference key="14">
    <citation type="journal article" date="2011" name="Eukaryot. Cell">
        <title>Candida albicans Hap43 is a repressor induced under low-iron conditions and is essential for iron-responsive transcriptional regulation and virulence.</title>
        <authorList>
            <person name="Hsu P.C."/>
            <person name="Yang C.Y."/>
            <person name="Lan C.Y."/>
        </authorList>
    </citation>
    <scope>INDUCTION</scope>
</reference>
<reference key="15">
    <citation type="journal article" date="2012" name="PLoS ONE">
        <title>A novel role for the transcription factor Cwt1p as a negative regulator of nitrosative stress in Candida albicans.</title>
        <authorList>
            <person name="Sellam A."/>
            <person name="Tebbji F."/>
            <person name="Whiteway M."/>
            <person name="Nantel A."/>
        </authorList>
    </citation>
    <scope>FUNCTION</scope>
    <scope>INDUCTION</scope>
</reference>
<reference key="16">
    <citation type="journal article" date="2012" name="PLoS ONE">
        <title>Cellular responses of Candida albicans to phagocytosis and the extracellular activities of neutrophils are critical to counteract carbohydrate starvation, oxidative and nitrosative stress.</title>
        <authorList>
            <person name="Miramon P."/>
            <person name="Dunker C."/>
            <person name="Windecker H."/>
            <person name="Bohovych I.M."/>
            <person name="Brown A.J."/>
            <person name="Kurzai O."/>
            <person name="Hube B."/>
        </authorList>
    </citation>
    <scope>FUNCTION</scope>
    <scope>INDUCTION</scope>
    <scope>DISRUPTION PHENOTYPE</scope>
</reference>
<proteinExistence type="evidence at transcript level"/>
<dbReference type="EC" id="1.14.12.17"/>
<dbReference type="EMBL" id="CP017630">
    <property type="protein sequence ID" value="AOW31470.1"/>
    <property type="molecule type" value="Genomic_DNA"/>
</dbReference>
<dbReference type="RefSeq" id="XP_711046.1">
    <property type="nucleotide sequence ID" value="XM_705954.1"/>
</dbReference>
<dbReference type="SMR" id="Q59MV9"/>
<dbReference type="BioGRID" id="1230425">
    <property type="interactions" value="2"/>
</dbReference>
<dbReference type="FunCoup" id="Q59MV9">
    <property type="interactions" value="379"/>
</dbReference>
<dbReference type="STRING" id="237561.Q59MV9"/>
<dbReference type="EnsemblFungi" id="CR_07790C_A-T">
    <property type="protein sequence ID" value="CR_07790C_A-T-p1"/>
    <property type="gene ID" value="CR_07790C_A"/>
</dbReference>
<dbReference type="GeneID" id="3647353"/>
<dbReference type="KEGG" id="cal:CAALFM_CR07790CA"/>
<dbReference type="CGD" id="CAL0000179202">
    <property type="gene designation" value="YHB1"/>
</dbReference>
<dbReference type="VEuPathDB" id="FungiDB:CR_07790C_A"/>
<dbReference type="eggNOG" id="KOG3378">
    <property type="taxonomic scope" value="Eukaryota"/>
</dbReference>
<dbReference type="HOGENOM" id="CLU_003827_12_0_1"/>
<dbReference type="InParanoid" id="Q59MV9"/>
<dbReference type="OMA" id="ADIHYEV"/>
<dbReference type="OrthoDB" id="436496at2759"/>
<dbReference type="PHI-base" id="PHI:500"/>
<dbReference type="PRO" id="PR:Q59MV9"/>
<dbReference type="Proteomes" id="UP000000559">
    <property type="component" value="Chromosome R"/>
</dbReference>
<dbReference type="GO" id="GO:0005737">
    <property type="term" value="C:cytoplasm"/>
    <property type="evidence" value="ECO:0000318"/>
    <property type="project" value="GO_Central"/>
</dbReference>
<dbReference type="GO" id="GO:0071949">
    <property type="term" value="F:FAD binding"/>
    <property type="evidence" value="ECO:0000318"/>
    <property type="project" value="GO_Central"/>
</dbReference>
<dbReference type="GO" id="GO:0020037">
    <property type="term" value="F:heme binding"/>
    <property type="evidence" value="ECO:0007669"/>
    <property type="project" value="InterPro"/>
</dbReference>
<dbReference type="GO" id="GO:0046872">
    <property type="term" value="F:metal ion binding"/>
    <property type="evidence" value="ECO:0007669"/>
    <property type="project" value="UniProtKB-KW"/>
</dbReference>
<dbReference type="GO" id="GO:0008941">
    <property type="term" value="F:nitric oxide dioxygenase NAD(P)H activity"/>
    <property type="evidence" value="ECO:0000315"/>
    <property type="project" value="CGD"/>
</dbReference>
<dbReference type="GO" id="GO:0019825">
    <property type="term" value="F:oxygen binding"/>
    <property type="evidence" value="ECO:0007669"/>
    <property type="project" value="InterPro"/>
</dbReference>
<dbReference type="GO" id="GO:0071500">
    <property type="term" value="P:cellular response to nitrosative stress"/>
    <property type="evidence" value="ECO:0000315"/>
    <property type="project" value="CGD"/>
</dbReference>
<dbReference type="GO" id="GO:0030447">
    <property type="term" value="P:filamentous growth"/>
    <property type="evidence" value="ECO:0000315"/>
    <property type="project" value="CGD"/>
</dbReference>
<dbReference type="GO" id="GO:0044182">
    <property type="term" value="P:filamentous growth of a population of unicellular organisms"/>
    <property type="evidence" value="ECO:0000315"/>
    <property type="project" value="CGD"/>
</dbReference>
<dbReference type="GO" id="GO:0046210">
    <property type="term" value="P:nitric oxide catabolic process"/>
    <property type="evidence" value="ECO:0000315"/>
    <property type="project" value="CGD"/>
</dbReference>
<dbReference type="GO" id="GO:0009636">
    <property type="term" value="P:response to toxic substance"/>
    <property type="evidence" value="ECO:0000315"/>
    <property type="project" value="CGD"/>
</dbReference>
<dbReference type="CDD" id="cd19754">
    <property type="entry name" value="FHb_fungal-globin"/>
    <property type="match status" value="1"/>
</dbReference>
<dbReference type="CDD" id="cd06184">
    <property type="entry name" value="flavohem_like_fad_nad_binding"/>
    <property type="match status" value="1"/>
</dbReference>
<dbReference type="FunFam" id="1.10.490.10:FF:000003">
    <property type="entry name" value="Flavohemoprotein"/>
    <property type="match status" value="1"/>
</dbReference>
<dbReference type="FunFam" id="2.40.30.10:FF:000034">
    <property type="entry name" value="Flavohemoprotein"/>
    <property type="match status" value="1"/>
</dbReference>
<dbReference type="FunFam" id="3.40.50.80:FF:000076">
    <property type="entry name" value="Flavohemoprotein"/>
    <property type="match status" value="1"/>
</dbReference>
<dbReference type="Gene3D" id="1.10.490.10">
    <property type="entry name" value="Globins"/>
    <property type="match status" value="1"/>
</dbReference>
<dbReference type="Gene3D" id="3.40.50.80">
    <property type="entry name" value="Nucleotide-binding domain of ferredoxin-NADP reductase (FNR) module"/>
    <property type="match status" value="1"/>
</dbReference>
<dbReference type="Gene3D" id="2.40.30.10">
    <property type="entry name" value="Translation factors"/>
    <property type="match status" value="1"/>
</dbReference>
<dbReference type="InterPro" id="IPR008333">
    <property type="entry name" value="Cbr1-like_FAD-bd_dom"/>
</dbReference>
<dbReference type="InterPro" id="IPR017927">
    <property type="entry name" value="FAD-bd_FR_type"/>
</dbReference>
<dbReference type="InterPro" id="IPR039261">
    <property type="entry name" value="FNR_nucleotide-bd"/>
</dbReference>
<dbReference type="InterPro" id="IPR000971">
    <property type="entry name" value="Globin"/>
</dbReference>
<dbReference type="InterPro" id="IPR009050">
    <property type="entry name" value="Globin-like_sf"/>
</dbReference>
<dbReference type="InterPro" id="IPR012292">
    <property type="entry name" value="Globin/Proto"/>
</dbReference>
<dbReference type="InterPro" id="IPR001433">
    <property type="entry name" value="OxRdtase_FAD/NAD-bd"/>
</dbReference>
<dbReference type="InterPro" id="IPR017938">
    <property type="entry name" value="Riboflavin_synthase-like_b-brl"/>
</dbReference>
<dbReference type="PANTHER" id="PTHR43396">
    <property type="entry name" value="FLAVOHEMOPROTEIN"/>
    <property type="match status" value="1"/>
</dbReference>
<dbReference type="PANTHER" id="PTHR43396:SF3">
    <property type="entry name" value="FLAVOHEMOPROTEIN"/>
    <property type="match status" value="1"/>
</dbReference>
<dbReference type="Pfam" id="PF00970">
    <property type="entry name" value="FAD_binding_6"/>
    <property type="match status" value="1"/>
</dbReference>
<dbReference type="Pfam" id="PF00042">
    <property type="entry name" value="Globin"/>
    <property type="match status" value="1"/>
</dbReference>
<dbReference type="Pfam" id="PF00175">
    <property type="entry name" value="NAD_binding_1"/>
    <property type="match status" value="1"/>
</dbReference>
<dbReference type="PRINTS" id="PR00409">
    <property type="entry name" value="PHDIOXRDTASE"/>
</dbReference>
<dbReference type="SUPFAM" id="SSF52343">
    <property type="entry name" value="Ferredoxin reductase-like, C-terminal NADP-linked domain"/>
    <property type="match status" value="1"/>
</dbReference>
<dbReference type="SUPFAM" id="SSF46458">
    <property type="entry name" value="Globin-like"/>
    <property type="match status" value="1"/>
</dbReference>
<dbReference type="SUPFAM" id="SSF63380">
    <property type="entry name" value="Riboflavin synthase domain-like"/>
    <property type="match status" value="1"/>
</dbReference>
<dbReference type="PROSITE" id="PS51384">
    <property type="entry name" value="FAD_FR"/>
    <property type="match status" value="1"/>
</dbReference>
<dbReference type="PROSITE" id="PS01033">
    <property type="entry name" value="GLOBIN"/>
    <property type="match status" value="1"/>
</dbReference>
<comment type="function">
    <text evidence="5 9 11 13 15 16">Nitric oxide dioxygenase involved in NO detoxification in an aerobic process, termed nitric oxide dioxygenase (NOD) reaction that utilizes O(2) and NAD(P)H to convert NO to nitrate, which protects the fungus from various noxious nitrogen compounds. Therefore, plays a central role in the inducible response to nitrosative stress. Plays a role in virulence since nitric oxide is generated by macrophages of the host immune system.</text>
</comment>
<comment type="catalytic activity">
    <reaction>
        <text>2 nitric oxide + NADPH + 2 O2 = 2 nitrate + NADP(+) + H(+)</text>
        <dbReference type="Rhea" id="RHEA:19465"/>
        <dbReference type="ChEBI" id="CHEBI:15378"/>
        <dbReference type="ChEBI" id="CHEBI:15379"/>
        <dbReference type="ChEBI" id="CHEBI:16480"/>
        <dbReference type="ChEBI" id="CHEBI:17632"/>
        <dbReference type="ChEBI" id="CHEBI:57783"/>
        <dbReference type="ChEBI" id="CHEBI:58349"/>
        <dbReference type="EC" id="1.14.12.17"/>
    </reaction>
</comment>
<comment type="catalytic activity">
    <reaction>
        <text>2 nitric oxide + NADH + 2 O2 = 2 nitrate + NAD(+) + H(+)</text>
        <dbReference type="Rhea" id="RHEA:19469"/>
        <dbReference type="ChEBI" id="CHEBI:15378"/>
        <dbReference type="ChEBI" id="CHEBI:15379"/>
        <dbReference type="ChEBI" id="CHEBI:16480"/>
        <dbReference type="ChEBI" id="CHEBI:17632"/>
        <dbReference type="ChEBI" id="CHEBI:57540"/>
        <dbReference type="ChEBI" id="CHEBI:57945"/>
        <dbReference type="EC" id="1.14.12.17"/>
    </reaction>
</comment>
<comment type="cofactor">
    <cofactor>
        <name>FAD</name>
        <dbReference type="ChEBI" id="CHEBI:57692"/>
    </cofactor>
    <text>Binds 1 FAD per subunit.</text>
</comment>
<comment type="cofactor">
    <cofactor>
        <name>heme b</name>
        <dbReference type="ChEBI" id="CHEBI:60344"/>
    </cofactor>
    <text>Binds 1 heme b group per subunit.</text>
</comment>
<comment type="activity regulation">
    <text evidence="8">Inhibited by imidazoles.</text>
</comment>
<comment type="subcellular location">
    <subcellularLocation>
        <location evidence="1">Cytoplasm</location>
    </subcellularLocation>
</comment>
<comment type="induction">
    <text evidence="4 5 6 7 9 10 11 12 14 15 16">Expression is under the control of the CDA4 transcription factor. Induced by nitric oxide, high-iron conditions, during transition to filamentous growth, by contact with host macrophages, and during oral infection. Expression is repressed by HAP43 and CWT1.</text>
</comment>
<comment type="domain">
    <text evidence="1">Consists of two distinct domains; a N-terminal heme-containing oxygen-binding domain and a C-terminal reductase domain with binding sites for FAD and NAD(P)H.</text>
</comment>
<comment type="disruption phenotype">
    <text evidence="16">Leads to increased susceptibility to neutrophils.</text>
</comment>
<comment type="similarity">
    <text evidence="2">Belongs to the globin family.</text>
</comment>